<accession>A8HME3</accession>
<keyword id="KW-0002">3D-structure</keyword>
<keyword id="KW-0966">Cell projection</keyword>
<keyword id="KW-0969">Cilium</keyword>
<keyword id="KW-0282">Flagellum</keyword>
<keyword id="KW-0342">GTP-binding</keyword>
<keyword id="KW-0547">Nucleotide-binding</keyword>
<sequence>MAEHGLKIAVVGPQRTGKTLLCRALAEQPILLGEMSYQPTAAVRIQEISRVLGIDRVKVQFWDVSGSVQYQSYWPVLAKEVDGLLMVIDPNRPEQERDLETFYRNFAEPNNLYTRQCMVMAIQVQKEGGGLGGWQGLQGGLKKLSQSYVAINPANPAAGVQEAYSHLDVLFQGALQSKKEALESSYMNQEDQ</sequence>
<dbReference type="EMBL" id="DS496108">
    <property type="protein sequence ID" value="EDP09407.1"/>
    <property type="molecule type" value="Genomic_DNA"/>
</dbReference>
<dbReference type="EMBL" id="EF593954">
    <property type="protein sequence ID" value="ABU90456.1"/>
    <property type="molecule type" value="mRNA"/>
</dbReference>
<dbReference type="RefSeq" id="XP_001689669.1">
    <property type="nucleotide sequence ID" value="XM_001689617.1"/>
</dbReference>
<dbReference type="PDB" id="8RUY">
    <property type="method" value="EM"/>
    <property type="resolution" value="15.40 A"/>
    <property type="chains" value="T=1-192"/>
</dbReference>
<dbReference type="PDBsum" id="8RUY"/>
<dbReference type="EMDB" id="EMD-19515"/>
<dbReference type="SMR" id="A8HME3"/>
<dbReference type="PaxDb" id="3055-EDP09407"/>
<dbReference type="EnsemblPlants" id="PNW88659">
    <property type="protein sequence ID" value="PNW88659"/>
    <property type="gene ID" value="CHLRE_01g039200v5"/>
</dbReference>
<dbReference type="GeneID" id="5715530"/>
<dbReference type="Gramene" id="PNW88659">
    <property type="protein sequence ID" value="PNW88659"/>
    <property type="gene ID" value="CHLRE_01g039200v5"/>
</dbReference>
<dbReference type="KEGG" id="cre:CHLRE_01g039200v5"/>
<dbReference type="eggNOG" id="ENOG502RXD4">
    <property type="taxonomic scope" value="Eukaryota"/>
</dbReference>
<dbReference type="HOGENOM" id="CLU_1416996_0_0_1"/>
<dbReference type="OrthoDB" id="275177at2759"/>
<dbReference type="GO" id="GO:0031514">
    <property type="term" value="C:motile cilium"/>
    <property type="evidence" value="ECO:0007669"/>
    <property type="project" value="UniProtKB-SubCell"/>
</dbReference>
<dbReference type="GO" id="GO:0005525">
    <property type="term" value="F:GTP binding"/>
    <property type="evidence" value="ECO:0007669"/>
    <property type="project" value="UniProtKB-KW"/>
</dbReference>
<dbReference type="CDD" id="cd00882">
    <property type="entry name" value="Ras_like_GTPase"/>
    <property type="match status" value="1"/>
</dbReference>
<dbReference type="Gene3D" id="3.40.50.300">
    <property type="entry name" value="P-loop containing nucleotide triphosphate hydrolases"/>
    <property type="match status" value="1"/>
</dbReference>
<dbReference type="InterPro" id="IPR027417">
    <property type="entry name" value="P-loop_NTPase"/>
</dbReference>
<dbReference type="PANTHER" id="PTHR24073">
    <property type="entry name" value="DRAB5-RELATED"/>
    <property type="match status" value="1"/>
</dbReference>
<dbReference type="Pfam" id="PF08477">
    <property type="entry name" value="Roc"/>
    <property type="match status" value="1"/>
</dbReference>
<dbReference type="SUPFAM" id="SSF52540">
    <property type="entry name" value="P-loop containing nucleoside triphosphate hydrolases"/>
    <property type="match status" value="1"/>
</dbReference>
<name>IFT22_CHLRE</name>
<gene>
    <name type="primary">FAP9</name>
    <name type="ORF">CHLREDRAFT_195877</name>
</gene>
<protein>
    <recommendedName>
        <fullName>Intraflagellar transport protein 22</fullName>
    </recommendedName>
    <alternativeName>
        <fullName>Flagellar-associated protein 9</fullName>
    </alternativeName>
</protein>
<organism>
    <name type="scientific">Chlamydomonas reinhardtii</name>
    <name type="common">Chlamydomonas smithii</name>
    <dbReference type="NCBI Taxonomy" id="3055"/>
    <lineage>
        <taxon>Eukaryota</taxon>
        <taxon>Viridiplantae</taxon>
        <taxon>Chlorophyta</taxon>
        <taxon>core chlorophytes</taxon>
        <taxon>Chlorophyceae</taxon>
        <taxon>CS clade</taxon>
        <taxon>Chlamydomonadales</taxon>
        <taxon>Chlamydomonadaceae</taxon>
        <taxon>Chlamydomonas</taxon>
    </lineage>
</organism>
<reference key="1">
    <citation type="journal article" date="2007" name="Science">
        <title>The Chlamydomonas genome reveals the evolution of key animal and plant functions.</title>
        <authorList>
            <person name="Merchant S.S."/>
            <person name="Prochnik S.E."/>
            <person name="Vallon O."/>
            <person name="Harris E.H."/>
            <person name="Karpowicz S.J."/>
            <person name="Witman G.B."/>
            <person name="Terry A."/>
            <person name="Salamov A."/>
            <person name="Fritz-Laylin L.K."/>
            <person name="Marechal-Drouard L."/>
            <person name="Marshall W.F."/>
            <person name="Qu L.H."/>
            <person name="Nelson D.R."/>
            <person name="Sanderfoot A.A."/>
            <person name="Spalding M.H."/>
            <person name="Kapitonov V.V."/>
            <person name="Ren Q."/>
            <person name="Ferris P."/>
            <person name="Lindquist E."/>
            <person name="Shapiro H."/>
            <person name="Lucas S.M."/>
            <person name="Grimwood J."/>
            <person name="Schmutz J."/>
            <person name="Cardol P."/>
            <person name="Cerutti H."/>
            <person name="Chanfreau G."/>
            <person name="Chen C.L."/>
            <person name="Cognat V."/>
            <person name="Croft M.T."/>
            <person name="Dent R."/>
            <person name="Dutcher S."/>
            <person name="Fernandez E."/>
            <person name="Fukuzawa H."/>
            <person name="Gonzalez-Ballester D."/>
            <person name="Gonzalez-Halphen D."/>
            <person name="Hallmann A."/>
            <person name="Hanikenne M."/>
            <person name="Hippler M."/>
            <person name="Inwood W."/>
            <person name="Jabbari K."/>
            <person name="Kalanon M."/>
            <person name="Kuras R."/>
            <person name="Lefebvre P.A."/>
            <person name="Lemaire S.D."/>
            <person name="Lobanov A.V."/>
            <person name="Lohr M."/>
            <person name="Manuell A."/>
            <person name="Meier I."/>
            <person name="Mets L."/>
            <person name="Mittag M."/>
            <person name="Mittelmeier T."/>
            <person name="Moroney J.V."/>
            <person name="Moseley J."/>
            <person name="Napoli C."/>
            <person name="Nedelcu A.M."/>
            <person name="Niyogi K."/>
            <person name="Novoselov S.V."/>
            <person name="Paulsen I.T."/>
            <person name="Pazour G.J."/>
            <person name="Purton S."/>
            <person name="Ral J.P."/>
            <person name="Riano-Pachon D.M."/>
            <person name="Riekhof W."/>
            <person name="Rymarquis L."/>
            <person name="Schroda M."/>
            <person name="Stern D."/>
            <person name="Umen J."/>
            <person name="Willows R."/>
            <person name="Wilson N."/>
            <person name="Zimmer S.L."/>
            <person name="Allmer J."/>
            <person name="Balk J."/>
            <person name="Bisova K."/>
            <person name="Chen C.J."/>
            <person name="Elias M."/>
            <person name="Gendler K."/>
            <person name="Hauser C."/>
            <person name="Lamb M.R."/>
            <person name="Ledford H."/>
            <person name="Long J.C."/>
            <person name="Minagawa J."/>
            <person name="Page M.D."/>
            <person name="Pan J."/>
            <person name="Pootakham W."/>
            <person name="Roje S."/>
            <person name="Rose A."/>
            <person name="Stahlberg E."/>
            <person name="Terauchi A.M."/>
            <person name="Yang P."/>
            <person name="Ball S."/>
            <person name="Bowler C."/>
            <person name="Dieckmann C.L."/>
            <person name="Gladyshev V.N."/>
            <person name="Green P."/>
            <person name="Jorgensen R."/>
            <person name="Mayfield S."/>
            <person name="Mueller-Roeber B."/>
            <person name="Rajamani S."/>
            <person name="Sayre R.T."/>
            <person name="Brokstein P."/>
            <person name="Dubchak I."/>
            <person name="Goodstein D."/>
            <person name="Hornick L."/>
            <person name="Huang Y.W."/>
            <person name="Jhaveri J."/>
            <person name="Luo Y."/>
            <person name="Martinez D."/>
            <person name="Ngau W.C."/>
            <person name="Otillar B."/>
            <person name="Poliakov A."/>
            <person name="Porter A."/>
            <person name="Szajkowski L."/>
            <person name="Werner G."/>
            <person name="Zhou K."/>
            <person name="Grigoriev I.V."/>
            <person name="Rokhsar D.S."/>
            <person name="Grossman A.R."/>
        </authorList>
    </citation>
    <scope>NUCLEOTIDE SEQUENCE [LARGE SCALE GENOMIC DNA]</scope>
    <source>
        <strain>CC-503</strain>
    </source>
</reference>
<reference key="2">
    <citation type="submission" date="2007-05" db="EMBL/GenBank/DDBJ databases">
        <authorList>
            <person name="Qin H."/>
            <person name="Rosenbaum J.L."/>
        </authorList>
    </citation>
    <scope>NUCLEOTIDE SEQUENCE [MRNA]</scope>
</reference>
<reference key="3">
    <citation type="journal article" date="2012" name="Cytoskeleton">
        <title>The RABL5 homolog IFT22 regulates the cellular pool size and the amount of IFT particles partitioned to the flagellar compartment in Chlamydomonas reinhardtii.</title>
        <authorList>
            <person name="Silva D.A."/>
            <person name="Huang X."/>
            <person name="Behal R.H."/>
            <person name="Cole D.G."/>
            <person name="Qin H."/>
        </authorList>
    </citation>
    <scope>FUNCTION</scope>
    <scope>SUBCELLULAR LOCATION</scope>
    <scope>IDENTIFICATION IN THE IFT COMPLEX B</scope>
</reference>
<evidence type="ECO:0000250" key="1"/>
<evidence type="ECO:0000269" key="2">
    <source>
    </source>
</evidence>
<evidence type="ECO:0000305" key="3"/>
<evidence type="ECO:0000305" key="4">
    <source>
    </source>
</evidence>
<comment type="function">
    <text evidence="2">Component of the intraflagellar transport (IFT) complex B. Functions in regulating the cellular pool size of both complex A and complex B and thus plays a critical role in determining the cellular availability of IFT particles.</text>
</comment>
<comment type="subunit">
    <text evidence="2">Component of the IFT complex B, composed of IFT88, IFT70, IFT52, IFT46, IFT27, IFT25 and IFT22.</text>
</comment>
<comment type="subcellular location">
    <subcellularLocation>
        <location evidence="2">Cell projection</location>
        <location evidence="2">Cilium</location>
        <location evidence="2">Flagellum</location>
    </subcellularLocation>
</comment>
<comment type="similarity">
    <text evidence="3">Belongs to the small GTPase superfamily. Rab family.</text>
</comment>
<comment type="caution">
    <text evidence="4">Although similar to the small GTPase superfamily, lacks the conserved catalytic Gln in position 67 which is replaced by a Ser residue, possibly explaining the weak GTPase activity. In contrast to other members of the family, it is not prenylated (PubMed:22076686) and unlikely to associate directly with membranes.</text>
</comment>
<proteinExistence type="evidence at protein level"/>
<feature type="chain" id="PRO_0000429420" description="Intraflagellar transport protein 22">
    <location>
        <begin position="1"/>
        <end position="192"/>
    </location>
</feature>
<feature type="binding site" evidence="1">
    <location>
        <begin position="12"/>
        <end position="19"/>
    </location>
    <ligand>
        <name>GTP</name>
        <dbReference type="ChEBI" id="CHEBI:37565"/>
    </ligand>
</feature>
<feature type="binding site" evidence="1">
    <location>
        <begin position="62"/>
        <end position="69"/>
    </location>
    <ligand>
        <name>GTP</name>
        <dbReference type="ChEBI" id="CHEBI:37565"/>
    </ligand>
</feature>